<feature type="chain" id="PRO_0000330456" description="GATA zinc finger domain-containing protein 23">
    <location>
        <begin position="1"/>
        <end position="295"/>
    </location>
</feature>
<feature type="DNA-binding region" description="A.T hook">
    <location>
        <begin position="229"/>
        <end position="241"/>
    </location>
</feature>
<feature type="zinc finger region" description="GATA-type" evidence="1">
    <location>
        <begin position="243"/>
        <end position="270"/>
    </location>
</feature>
<feature type="region of interest" description="Disordered" evidence="2">
    <location>
        <begin position="115"/>
        <end position="240"/>
    </location>
</feature>
<feature type="compositionally biased region" description="Low complexity" evidence="2">
    <location>
        <begin position="115"/>
        <end position="126"/>
    </location>
</feature>
<feature type="compositionally biased region" description="Polar residues" evidence="2">
    <location>
        <begin position="127"/>
        <end position="145"/>
    </location>
</feature>
<feature type="compositionally biased region" description="Low complexity" evidence="2">
    <location>
        <begin position="146"/>
        <end position="163"/>
    </location>
</feature>
<feature type="compositionally biased region" description="Basic residues" evidence="2">
    <location>
        <begin position="164"/>
        <end position="174"/>
    </location>
</feature>
<feature type="compositionally biased region" description="Low complexity" evidence="2">
    <location>
        <begin position="181"/>
        <end position="227"/>
    </location>
</feature>
<dbReference type="EMBL" id="AAFI02000090">
    <property type="protein sequence ID" value="EAL64017.1"/>
    <property type="molecule type" value="Genomic_DNA"/>
</dbReference>
<dbReference type="RefSeq" id="XP_637521.1">
    <property type="nucleotide sequence ID" value="XM_632429.1"/>
</dbReference>
<dbReference type="PaxDb" id="44689-DDB0220468"/>
<dbReference type="EnsemblProtists" id="EAL64017">
    <property type="protein sequence ID" value="EAL64017"/>
    <property type="gene ID" value="DDB_G0286839"/>
</dbReference>
<dbReference type="GeneID" id="8625819"/>
<dbReference type="KEGG" id="ddi:DDB_G0286839"/>
<dbReference type="dictyBase" id="DDB_G0286839">
    <property type="gene designation" value="gtaW"/>
</dbReference>
<dbReference type="VEuPathDB" id="AmoebaDB:DDB_G0286839"/>
<dbReference type="HOGENOM" id="CLU_944688_0_0_1"/>
<dbReference type="InParanoid" id="Q54L82"/>
<dbReference type="PhylomeDB" id="Q54L82"/>
<dbReference type="PRO" id="PR:Q54L82"/>
<dbReference type="Proteomes" id="UP000002195">
    <property type="component" value="Chromosome 4"/>
</dbReference>
<dbReference type="GO" id="GO:0043565">
    <property type="term" value="F:sequence-specific DNA binding"/>
    <property type="evidence" value="ECO:0007669"/>
    <property type="project" value="InterPro"/>
</dbReference>
<dbReference type="GO" id="GO:0008270">
    <property type="term" value="F:zinc ion binding"/>
    <property type="evidence" value="ECO:0007669"/>
    <property type="project" value="UniProtKB-KW"/>
</dbReference>
<dbReference type="GO" id="GO:0006355">
    <property type="term" value="P:regulation of DNA-templated transcription"/>
    <property type="evidence" value="ECO:0007669"/>
    <property type="project" value="InterPro"/>
</dbReference>
<dbReference type="Gene3D" id="3.30.50.10">
    <property type="entry name" value="Erythroid Transcription Factor GATA-1, subunit A"/>
    <property type="match status" value="1"/>
</dbReference>
<dbReference type="InterPro" id="IPR000679">
    <property type="entry name" value="Znf_GATA"/>
</dbReference>
<dbReference type="InterPro" id="IPR013088">
    <property type="entry name" value="Znf_NHR/GATA"/>
</dbReference>
<dbReference type="Pfam" id="PF00320">
    <property type="entry name" value="GATA"/>
    <property type="match status" value="1"/>
</dbReference>
<dbReference type="SMART" id="SM00401">
    <property type="entry name" value="ZnF_GATA"/>
    <property type="match status" value="1"/>
</dbReference>
<dbReference type="SUPFAM" id="SSF57716">
    <property type="entry name" value="Glucocorticoid receptor-like (DNA-binding domain)"/>
    <property type="match status" value="1"/>
</dbReference>
<dbReference type="PROSITE" id="PS50114">
    <property type="entry name" value="GATA_ZN_FINGER_2"/>
    <property type="match status" value="1"/>
</dbReference>
<name>GTAW_DICDI</name>
<sequence>MVKRNNNNSINYEINKIIPVQTTKDINSKREKEIHVQIKKINSNRTFVYENIHRHILLVLENFGSTKNLFLVLSDCLATLKGYDSQEYQLQLELQTISDSTTTTTTNTVSTVATASTSKTATSKNVISNIENNTNKSQPLESNDLTPPSSKSSNSSPSTSPSKRVSKSKTRVTKKPNQVISTSSSGETENLTTTSTADTTATTDTADTTDGTNTRTSNTSSDDTTTESTKKRGRPSKIQPDSCYVCRRTFTSYWRKGIFNDQNEDLCNPCGLNYLKKGKKEQISKNQNSIHNILN</sequence>
<evidence type="ECO:0000255" key="1">
    <source>
        <dbReference type="PROSITE-ProRule" id="PRU00094"/>
    </source>
</evidence>
<evidence type="ECO:0000256" key="2">
    <source>
        <dbReference type="SAM" id="MobiDB-lite"/>
    </source>
</evidence>
<keyword id="KW-0238">DNA-binding</keyword>
<keyword id="KW-0479">Metal-binding</keyword>
<keyword id="KW-1185">Reference proteome</keyword>
<keyword id="KW-0862">Zinc</keyword>
<keyword id="KW-0863">Zinc-finger</keyword>
<proteinExistence type="predicted"/>
<gene>
    <name type="primary">gtaW</name>
    <name type="ORF">DDB_G0286839</name>
</gene>
<reference key="1">
    <citation type="journal article" date="2005" name="Nature">
        <title>The genome of the social amoeba Dictyostelium discoideum.</title>
        <authorList>
            <person name="Eichinger L."/>
            <person name="Pachebat J.A."/>
            <person name="Gloeckner G."/>
            <person name="Rajandream M.A."/>
            <person name="Sucgang R."/>
            <person name="Berriman M."/>
            <person name="Song J."/>
            <person name="Olsen R."/>
            <person name="Szafranski K."/>
            <person name="Xu Q."/>
            <person name="Tunggal B."/>
            <person name="Kummerfeld S."/>
            <person name="Madera M."/>
            <person name="Konfortov B.A."/>
            <person name="Rivero F."/>
            <person name="Bankier A.T."/>
            <person name="Lehmann R."/>
            <person name="Hamlin N."/>
            <person name="Davies R."/>
            <person name="Gaudet P."/>
            <person name="Fey P."/>
            <person name="Pilcher K."/>
            <person name="Chen G."/>
            <person name="Saunders D."/>
            <person name="Sodergren E.J."/>
            <person name="Davis P."/>
            <person name="Kerhornou A."/>
            <person name="Nie X."/>
            <person name="Hall N."/>
            <person name="Anjard C."/>
            <person name="Hemphill L."/>
            <person name="Bason N."/>
            <person name="Farbrother P."/>
            <person name="Desany B."/>
            <person name="Just E."/>
            <person name="Morio T."/>
            <person name="Rost R."/>
            <person name="Churcher C.M."/>
            <person name="Cooper J."/>
            <person name="Haydock S."/>
            <person name="van Driessche N."/>
            <person name="Cronin A."/>
            <person name="Goodhead I."/>
            <person name="Muzny D.M."/>
            <person name="Mourier T."/>
            <person name="Pain A."/>
            <person name="Lu M."/>
            <person name="Harper D."/>
            <person name="Lindsay R."/>
            <person name="Hauser H."/>
            <person name="James K.D."/>
            <person name="Quiles M."/>
            <person name="Madan Babu M."/>
            <person name="Saito T."/>
            <person name="Buchrieser C."/>
            <person name="Wardroper A."/>
            <person name="Felder M."/>
            <person name="Thangavelu M."/>
            <person name="Johnson D."/>
            <person name="Knights A."/>
            <person name="Loulseged H."/>
            <person name="Mungall K.L."/>
            <person name="Oliver K."/>
            <person name="Price C."/>
            <person name="Quail M.A."/>
            <person name="Urushihara H."/>
            <person name="Hernandez J."/>
            <person name="Rabbinowitsch E."/>
            <person name="Steffen D."/>
            <person name="Sanders M."/>
            <person name="Ma J."/>
            <person name="Kohara Y."/>
            <person name="Sharp S."/>
            <person name="Simmonds M.N."/>
            <person name="Spiegler S."/>
            <person name="Tivey A."/>
            <person name="Sugano S."/>
            <person name="White B."/>
            <person name="Walker D."/>
            <person name="Woodward J.R."/>
            <person name="Winckler T."/>
            <person name="Tanaka Y."/>
            <person name="Shaulsky G."/>
            <person name="Schleicher M."/>
            <person name="Weinstock G.M."/>
            <person name="Rosenthal A."/>
            <person name="Cox E.C."/>
            <person name="Chisholm R.L."/>
            <person name="Gibbs R.A."/>
            <person name="Loomis W.F."/>
            <person name="Platzer M."/>
            <person name="Kay R.R."/>
            <person name="Williams J.G."/>
            <person name="Dear P.H."/>
            <person name="Noegel A.A."/>
            <person name="Barrell B.G."/>
            <person name="Kuspa A."/>
        </authorList>
    </citation>
    <scope>NUCLEOTIDE SEQUENCE [LARGE SCALE GENOMIC DNA]</scope>
    <source>
        <strain>AX4</strain>
    </source>
</reference>
<accession>Q54L82</accession>
<protein>
    <recommendedName>
        <fullName>GATA zinc finger domain-containing protein 23</fullName>
    </recommendedName>
</protein>
<organism>
    <name type="scientific">Dictyostelium discoideum</name>
    <name type="common">Social amoeba</name>
    <dbReference type="NCBI Taxonomy" id="44689"/>
    <lineage>
        <taxon>Eukaryota</taxon>
        <taxon>Amoebozoa</taxon>
        <taxon>Evosea</taxon>
        <taxon>Eumycetozoa</taxon>
        <taxon>Dictyostelia</taxon>
        <taxon>Dictyosteliales</taxon>
        <taxon>Dictyosteliaceae</taxon>
        <taxon>Dictyostelium</taxon>
    </lineage>
</organism>